<organism>
    <name type="scientific">Pseudomonas syringae pv. syringae (strain B728a)</name>
    <dbReference type="NCBI Taxonomy" id="205918"/>
    <lineage>
        <taxon>Bacteria</taxon>
        <taxon>Pseudomonadati</taxon>
        <taxon>Pseudomonadota</taxon>
        <taxon>Gammaproteobacteria</taxon>
        <taxon>Pseudomonadales</taxon>
        <taxon>Pseudomonadaceae</taxon>
        <taxon>Pseudomonas</taxon>
        <taxon>Pseudomonas syringae</taxon>
    </lineage>
</organism>
<protein>
    <recommendedName>
        <fullName evidence="1">Large ribosomal subunit protein bL31</fullName>
    </recommendedName>
    <alternativeName>
        <fullName evidence="2">50S ribosomal protein L31</fullName>
    </alternativeName>
</protein>
<proteinExistence type="inferred from homology"/>
<accession>Q4ZZF3</accession>
<dbReference type="EMBL" id="CP000075">
    <property type="protein sequence ID" value="AAY35469.1"/>
    <property type="molecule type" value="Genomic_DNA"/>
</dbReference>
<dbReference type="RefSeq" id="WP_003403048.1">
    <property type="nucleotide sequence ID" value="NC_007005.1"/>
</dbReference>
<dbReference type="RefSeq" id="YP_233507.1">
    <property type="nucleotide sequence ID" value="NC_007005.1"/>
</dbReference>
<dbReference type="SMR" id="Q4ZZF3"/>
<dbReference type="STRING" id="205918.Psyr_0399"/>
<dbReference type="KEGG" id="psb:Psyr_0399"/>
<dbReference type="PATRIC" id="fig|205918.7.peg.413"/>
<dbReference type="eggNOG" id="COG0254">
    <property type="taxonomic scope" value="Bacteria"/>
</dbReference>
<dbReference type="HOGENOM" id="CLU_114306_4_0_6"/>
<dbReference type="OrthoDB" id="9803251at2"/>
<dbReference type="Proteomes" id="UP000000426">
    <property type="component" value="Chromosome"/>
</dbReference>
<dbReference type="GO" id="GO:1990904">
    <property type="term" value="C:ribonucleoprotein complex"/>
    <property type="evidence" value="ECO:0007669"/>
    <property type="project" value="UniProtKB-KW"/>
</dbReference>
<dbReference type="GO" id="GO:0005840">
    <property type="term" value="C:ribosome"/>
    <property type="evidence" value="ECO:0007669"/>
    <property type="project" value="UniProtKB-KW"/>
</dbReference>
<dbReference type="GO" id="GO:0046872">
    <property type="term" value="F:metal ion binding"/>
    <property type="evidence" value="ECO:0007669"/>
    <property type="project" value="UniProtKB-KW"/>
</dbReference>
<dbReference type="GO" id="GO:0019843">
    <property type="term" value="F:rRNA binding"/>
    <property type="evidence" value="ECO:0007669"/>
    <property type="project" value="UniProtKB-KW"/>
</dbReference>
<dbReference type="GO" id="GO:0003735">
    <property type="term" value="F:structural constituent of ribosome"/>
    <property type="evidence" value="ECO:0007669"/>
    <property type="project" value="InterPro"/>
</dbReference>
<dbReference type="GO" id="GO:0006412">
    <property type="term" value="P:translation"/>
    <property type="evidence" value="ECO:0007669"/>
    <property type="project" value="UniProtKB-UniRule"/>
</dbReference>
<dbReference type="Gene3D" id="4.10.830.30">
    <property type="entry name" value="Ribosomal protein L31"/>
    <property type="match status" value="1"/>
</dbReference>
<dbReference type="HAMAP" id="MF_00501">
    <property type="entry name" value="Ribosomal_bL31_1"/>
    <property type="match status" value="1"/>
</dbReference>
<dbReference type="InterPro" id="IPR034704">
    <property type="entry name" value="Ribosomal_bL28/bL31-like_sf"/>
</dbReference>
<dbReference type="InterPro" id="IPR002150">
    <property type="entry name" value="Ribosomal_bL31"/>
</dbReference>
<dbReference type="InterPro" id="IPR027491">
    <property type="entry name" value="Ribosomal_bL31_A"/>
</dbReference>
<dbReference type="InterPro" id="IPR042105">
    <property type="entry name" value="Ribosomal_bL31_sf"/>
</dbReference>
<dbReference type="NCBIfam" id="TIGR00105">
    <property type="entry name" value="L31"/>
    <property type="match status" value="1"/>
</dbReference>
<dbReference type="NCBIfam" id="NF000612">
    <property type="entry name" value="PRK00019.1"/>
    <property type="match status" value="1"/>
</dbReference>
<dbReference type="PANTHER" id="PTHR33280">
    <property type="entry name" value="50S RIBOSOMAL PROTEIN L31, CHLOROPLASTIC"/>
    <property type="match status" value="1"/>
</dbReference>
<dbReference type="PANTHER" id="PTHR33280:SF6">
    <property type="entry name" value="LARGE RIBOSOMAL SUBUNIT PROTEIN BL31A"/>
    <property type="match status" value="1"/>
</dbReference>
<dbReference type="Pfam" id="PF01197">
    <property type="entry name" value="Ribosomal_L31"/>
    <property type="match status" value="1"/>
</dbReference>
<dbReference type="PRINTS" id="PR01249">
    <property type="entry name" value="RIBOSOMALL31"/>
</dbReference>
<dbReference type="SUPFAM" id="SSF143800">
    <property type="entry name" value="L28p-like"/>
    <property type="match status" value="1"/>
</dbReference>
<dbReference type="PROSITE" id="PS01143">
    <property type="entry name" value="RIBOSOMAL_L31"/>
    <property type="match status" value="1"/>
</dbReference>
<comment type="function">
    <text evidence="1">Binds the 23S rRNA.</text>
</comment>
<comment type="cofactor">
    <cofactor evidence="1">
        <name>Zn(2+)</name>
        <dbReference type="ChEBI" id="CHEBI:29105"/>
    </cofactor>
    <text evidence="1">Binds 1 zinc ion per subunit.</text>
</comment>
<comment type="subunit">
    <text evidence="1">Part of the 50S ribosomal subunit.</text>
</comment>
<comment type="similarity">
    <text evidence="1">Belongs to the bacterial ribosomal protein bL31 family. Type A subfamily.</text>
</comment>
<sequence>MKADIHPVYEAIDATCSCGNVIKTRSTLAAPLSLDVCNECHPFYTGKQKMLDVGGRVDKFKSRFGAFGATKAK</sequence>
<evidence type="ECO:0000255" key="1">
    <source>
        <dbReference type="HAMAP-Rule" id="MF_00501"/>
    </source>
</evidence>
<evidence type="ECO:0000305" key="2"/>
<keyword id="KW-0479">Metal-binding</keyword>
<keyword id="KW-0687">Ribonucleoprotein</keyword>
<keyword id="KW-0689">Ribosomal protein</keyword>
<keyword id="KW-0694">RNA-binding</keyword>
<keyword id="KW-0699">rRNA-binding</keyword>
<keyword id="KW-0862">Zinc</keyword>
<feature type="chain" id="PRO_0000259213" description="Large ribosomal subunit protein bL31">
    <location>
        <begin position="1"/>
        <end position="73"/>
    </location>
</feature>
<feature type="binding site" evidence="1">
    <location>
        <position position="16"/>
    </location>
    <ligand>
        <name>Zn(2+)</name>
        <dbReference type="ChEBI" id="CHEBI:29105"/>
    </ligand>
</feature>
<feature type="binding site" evidence="1">
    <location>
        <position position="18"/>
    </location>
    <ligand>
        <name>Zn(2+)</name>
        <dbReference type="ChEBI" id="CHEBI:29105"/>
    </ligand>
</feature>
<feature type="binding site" evidence="1">
    <location>
        <position position="37"/>
    </location>
    <ligand>
        <name>Zn(2+)</name>
        <dbReference type="ChEBI" id="CHEBI:29105"/>
    </ligand>
</feature>
<feature type="binding site" evidence="1">
    <location>
        <position position="40"/>
    </location>
    <ligand>
        <name>Zn(2+)</name>
        <dbReference type="ChEBI" id="CHEBI:29105"/>
    </ligand>
</feature>
<gene>
    <name evidence="1" type="primary">rpmE</name>
    <name type="ordered locus">Psyr_0399</name>
</gene>
<reference key="1">
    <citation type="journal article" date="2005" name="Proc. Natl. Acad. Sci. U.S.A.">
        <title>Comparison of the complete genome sequences of Pseudomonas syringae pv. syringae B728a and pv. tomato DC3000.</title>
        <authorList>
            <person name="Feil H."/>
            <person name="Feil W.S."/>
            <person name="Chain P."/>
            <person name="Larimer F."/>
            <person name="Dibartolo G."/>
            <person name="Copeland A."/>
            <person name="Lykidis A."/>
            <person name="Trong S."/>
            <person name="Nolan M."/>
            <person name="Goltsman E."/>
            <person name="Thiel J."/>
            <person name="Malfatti S."/>
            <person name="Loper J.E."/>
            <person name="Lapidus A."/>
            <person name="Detter J.C."/>
            <person name="Land M."/>
            <person name="Richardson P.M."/>
            <person name="Kyrpides N.C."/>
            <person name="Ivanova N."/>
            <person name="Lindow S.E."/>
        </authorList>
    </citation>
    <scope>NUCLEOTIDE SEQUENCE [LARGE SCALE GENOMIC DNA]</scope>
    <source>
        <strain>B728a</strain>
    </source>
</reference>
<name>RL31_PSEU2</name>